<dbReference type="EC" id="5.6.2.1" evidence="1"/>
<dbReference type="EMBL" id="U27841">
    <property type="protein sequence ID" value="AAA68949.1"/>
    <property type="molecule type" value="Genomic_DNA"/>
</dbReference>
<dbReference type="EMBL" id="AE000512">
    <property type="protein sequence ID" value="AAD35346.1"/>
    <property type="molecule type" value="Genomic_DNA"/>
</dbReference>
<dbReference type="PIR" id="S62737">
    <property type="entry name" value="S62737"/>
</dbReference>
<dbReference type="RefSeq" id="NP_228071.1">
    <property type="nucleotide sequence ID" value="NC_000853.1"/>
</dbReference>
<dbReference type="RefSeq" id="WP_004082962.1">
    <property type="nucleotide sequence ID" value="NZ_CP011107.1"/>
</dbReference>
<dbReference type="PDB" id="2GAI">
    <property type="method" value="X-ray"/>
    <property type="resolution" value="1.70 A"/>
    <property type="chains" value="A/B=3-633"/>
</dbReference>
<dbReference type="PDB" id="2GAJ">
    <property type="method" value="X-ray"/>
    <property type="resolution" value="1.95 A"/>
    <property type="chains" value="A/B=3-633"/>
</dbReference>
<dbReference type="PDBsum" id="2GAI"/>
<dbReference type="PDBsum" id="2GAJ"/>
<dbReference type="SMR" id="P46799"/>
<dbReference type="FunCoup" id="P46799">
    <property type="interactions" value="272"/>
</dbReference>
<dbReference type="STRING" id="243274.TM_0258"/>
<dbReference type="PaxDb" id="243274-THEMA_03435"/>
<dbReference type="EnsemblBacteria" id="AAD35346">
    <property type="protein sequence ID" value="AAD35346"/>
    <property type="gene ID" value="TM_0258"/>
</dbReference>
<dbReference type="KEGG" id="tma:TM0258"/>
<dbReference type="KEGG" id="tmi:THEMA_03435"/>
<dbReference type="KEGG" id="tmm:Tmari_0256"/>
<dbReference type="KEGG" id="tmw:THMA_0265"/>
<dbReference type="eggNOG" id="COG0550">
    <property type="taxonomic scope" value="Bacteria"/>
</dbReference>
<dbReference type="InParanoid" id="P46799"/>
<dbReference type="OrthoDB" id="9804262at2"/>
<dbReference type="BRENDA" id="5.6.2.1">
    <property type="organism ID" value="6331"/>
</dbReference>
<dbReference type="BRENDA" id="5.99.1.2">
    <property type="organism ID" value="6331"/>
</dbReference>
<dbReference type="EvolutionaryTrace" id="P46799"/>
<dbReference type="Proteomes" id="UP000008183">
    <property type="component" value="Chromosome"/>
</dbReference>
<dbReference type="GO" id="GO:0003677">
    <property type="term" value="F:DNA binding"/>
    <property type="evidence" value="ECO:0007669"/>
    <property type="project" value="UniProtKB-KW"/>
</dbReference>
<dbReference type="GO" id="GO:0003917">
    <property type="term" value="F:DNA topoisomerase type I (single strand cut, ATP-independent) activity"/>
    <property type="evidence" value="ECO:0007669"/>
    <property type="project" value="UniProtKB-UniRule"/>
</dbReference>
<dbReference type="GO" id="GO:0140226">
    <property type="term" value="F:RNA topoisomerase activity"/>
    <property type="evidence" value="ECO:0000314"/>
    <property type="project" value="FlyBase"/>
</dbReference>
<dbReference type="GO" id="GO:0008270">
    <property type="term" value="F:zinc ion binding"/>
    <property type="evidence" value="ECO:0007669"/>
    <property type="project" value="UniProtKB-KW"/>
</dbReference>
<dbReference type="GO" id="GO:0006265">
    <property type="term" value="P:DNA topological change"/>
    <property type="evidence" value="ECO:0007669"/>
    <property type="project" value="UniProtKB-UniRule"/>
</dbReference>
<dbReference type="CDD" id="cd00186">
    <property type="entry name" value="TOP1Ac"/>
    <property type="match status" value="1"/>
</dbReference>
<dbReference type="CDD" id="cd03363">
    <property type="entry name" value="TOPRIM_TopoIA_TopoI"/>
    <property type="match status" value="1"/>
</dbReference>
<dbReference type="Gene3D" id="3.40.50.140">
    <property type="match status" value="1"/>
</dbReference>
<dbReference type="Gene3D" id="1.10.460.10">
    <property type="entry name" value="Topoisomerase I, domain 2"/>
    <property type="match status" value="1"/>
</dbReference>
<dbReference type="Gene3D" id="2.70.20.10">
    <property type="entry name" value="Topoisomerase I, domain 3"/>
    <property type="match status" value="1"/>
</dbReference>
<dbReference type="Gene3D" id="1.10.290.10">
    <property type="entry name" value="Topoisomerase I, domain 4"/>
    <property type="match status" value="1"/>
</dbReference>
<dbReference type="HAMAP" id="MF_00952">
    <property type="entry name" value="Topoisom_1_prok"/>
    <property type="match status" value="1"/>
</dbReference>
<dbReference type="InterPro" id="IPR000380">
    <property type="entry name" value="Topo_IA"/>
</dbReference>
<dbReference type="InterPro" id="IPR003601">
    <property type="entry name" value="Topo_IA_2"/>
</dbReference>
<dbReference type="InterPro" id="IPR023406">
    <property type="entry name" value="Topo_IA_AS"/>
</dbReference>
<dbReference type="InterPro" id="IPR013497">
    <property type="entry name" value="Topo_IA_cen"/>
</dbReference>
<dbReference type="InterPro" id="IPR013824">
    <property type="entry name" value="Topo_IA_cen_sub1"/>
</dbReference>
<dbReference type="InterPro" id="IPR013825">
    <property type="entry name" value="Topo_IA_cen_sub2"/>
</dbReference>
<dbReference type="InterPro" id="IPR013826">
    <property type="entry name" value="Topo_IA_cen_sub3"/>
</dbReference>
<dbReference type="InterPro" id="IPR023405">
    <property type="entry name" value="Topo_IA_core_domain"/>
</dbReference>
<dbReference type="InterPro" id="IPR003602">
    <property type="entry name" value="Topo_IA_DNA-bd_dom"/>
</dbReference>
<dbReference type="InterPro" id="IPR005733">
    <property type="entry name" value="TopoI_bac-type"/>
</dbReference>
<dbReference type="InterPro" id="IPR028612">
    <property type="entry name" value="Topoisom_1_IA"/>
</dbReference>
<dbReference type="InterPro" id="IPR006171">
    <property type="entry name" value="TOPRIM_dom"/>
</dbReference>
<dbReference type="InterPro" id="IPR034149">
    <property type="entry name" value="TOPRIM_TopoI"/>
</dbReference>
<dbReference type="NCBIfam" id="TIGR01051">
    <property type="entry name" value="topA_bact"/>
    <property type="match status" value="1"/>
</dbReference>
<dbReference type="PANTHER" id="PTHR42785:SF1">
    <property type="entry name" value="DNA TOPOISOMERASE"/>
    <property type="match status" value="1"/>
</dbReference>
<dbReference type="PANTHER" id="PTHR42785">
    <property type="entry name" value="DNA TOPOISOMERASE, TYPE IA, CORE"/>
    <property type="match status" value="1"/>
</dbReference>
<dbReference type="Pfam" id="PF01131">
    <property type="entry name" value="Topoisom_bac"/>
    <property type="match status" value="1"/>
</dbReference>
<dbReference type="Pfam" id="PF01751">
    <property type="entry name" value="Toprim"/>
    <property type="match status" value="1"/>
</dbReference>
<dbReference type="PRINTS" id="PR00417">
    <property type="entry name" value="PRTPISMRASEI"/>
</dbReference>
<dbReference type="SMART" id="SM00437">
    <property type="entry name" value="TOP1Ac"/>
    <property type="match status" value="1"/>
</dbReference>
<dbReference type="SMART" id="SM00436">
    <property type="entry name" value="TOP1Bc"/>
    <property type="match status" value="1"/>
</dbReference>
<dbReference type="SMART" id="SM00493">
    <property type="entry name" value="TOPRIM"/>
    <property type="match status" value="1"/>
</dbReference>
<dbReference type="SUPFAM" id="SSF56712">
    <property type="entry name" value="Prokaryotic type I DNA topoisomerase"/>
    <property type="match status" value="1"/>
</dbReference>
<dbReference type="PROSITE" id="PS00396">
    <property type="entry name" value="TOPO_IA_1"/>
    <property type="match status" value="1"/>
</dbReference>
<dbReference type="PROSITE" id="PS52039">
    <property type="entry name" value="TOPO_IA_2"/>
    <property type="match status" value="1"/>
</dbReference>
<dbReference type="PROSITE" id="PS50880">
    <property type="entry name" value="TOPRIM"/>
    <property type="match status" value="1"/>
</dbReference>
<protein>
    <recommendedName>
        <fullName evidence="1">DNA topoisomerase 1</fullName>
        <ecNumber evidence="1">5.6.2.1</ecNumber>
    </recommendedName>
    <alternativeName>
        <fullName evidence="1">DNA topoisomerase I</fullName>
    </alternativeName>
    <alternativeName>
        <fullName>Omega-protein</fullName>
    </alternativeName>
    <alternativeName>
        <fullName>Relaxing enzyme</fullName>
    </alternativeName>
    <alternativeName>
        <fullName>Swivelase</fullName>
    </alternativeName>
    <alternativeName>
        <fullName>Untwisting enzyme</fullName>
    </alternativeName>
</protein>
<name>TOP1_THEMA</name>
<sequence>MSKKVKKYIVVESPAKAKTIKSILGNEYEVFASMGHIIDLPKSKFGVDLEKDFEPEFAVIKGKEKVVEKLKDLAKKGELLIASDMDREGEAIAWHIARVTNTLGRKNRIVFSEITPRVIREAVKNPREIDMKKVRAQLARRILDRIVGYSLSPVLWRNFKSNLSAGRVQSATLKLVCDREREILRFVPKKYHRITVNFDGLTAEIDVKEKKFFDAETLKEIQSIDELVVEEKKVSVKKFAPPEPFKTSTLQQEAYSKLGFSVSKTMMIAQQLYEGVETKDGHIAFITYMRTDSTRVSDYAKEEARNLITEVFGEEYVGSKRERRKSNAKIQDAHEAIRPTNVFMTPEEAGKYLNSDQKKLYELIWKRFLASQMKPSQYEETRFVLRTKDGKYRFKGTVLKKIFDGYEKVWKTERNTGEFPFEEGESVKPVVVKIEEQETKPKPRYTEGSLVKEMERLGIGRPSTYASTIKLLLNRGYIKKIRGYLYPTIVGSVVMDYLEKKYSDVVSVSFTAEMEKDLDEVEQGKKTDKIVLREFYESFSSVFDRNDRIVVDFPTNQKCSCGKEMRLSFGKYGFYLKCECGKTRSVKNDEIAVIDDGKIFLGRKDSESGSPDGRSVEGKGNLSEKRRKGKKGS</sequence>
<organism>
    <name type="scientific">Thermotoga maritima (strain ATCC 43589 / DSM 3109 / JCM 10099 / NBRC 100826 / MSB8)</name>
    <dbReference type="NCBI Taxonomy" id="243274"/>
    <lineage>
        <taxon>Bacteria</taxon>
        <taxon>Thermotogati</taxon>
        <taxon>Thermotogota</taxon>
        <taxon>Thermotogae</taxon>
        <taxon>Thermotogales</taxon>
        <taxon>Thermotogaceae</taxon>
        <taxon>Thermotoga</taxon>
    </lineage>
</organism>
<feature type="chain" id="PRO_0000145169" description="DNA topoisomerase 1">
    <location>
        <begin position="1"/>
        <end position="633"/>
    </location>
</feature>
<feature type="domain" description="Toprim" evidence="1">
    <location>
        <begin position="6"/>
        <end position="115"/>
    </location>
</feature>
<feature type="domain" description="Topo IA-type catalytic" evidence="2">
    <location>
        <begin position="130"/>
        <end position="543"/>
    </location>
</feature>
<feature type="zinc finger region" description="C4-type">
    <location>
        <begin position="559"/>
        <end position="580"/>
    </location>
</feature>
<feature type="region of interest" description="Interaction with DNA" evidence="1">
    <location>
        <begin position="164"/>
        <end position="169"/>
    </location>
</feature>
<feature type="region of interest" description="Disordered" evidence="3">
    <location>
        <begin position="601"/>
        <end position="633"/>
    </location>
</feature>
<feature type="active site" description="O-(5'-phospho-DNA)-tyrosine intermediate" evidence="2">
    <location>
        <position position="288"/>
    </location>
</feature>
<feature type="binding site" evidence="1">
    <location>
        <position position="12"/>
    </location>
    <ligand>
        <name>Mg(2+)</name>
        <dbReference type="ChEBI" id="CHEBI:18420"/>
        <note>catalytic</note>
    </ligand>
</feature>
<feature type="binding site" evidence="1">
    <location>
        <position position="84"/>
    </location>
    <ligand>
        <name>Mg(2+)</name>
        <dbReference type="ChEBI" id="CHEBI:18420"/>
        <note>catalytic</note>
    </ligand>
</feature>
<feature type="site" description="Interaction with DNA" evidence="1">
    <location>
        <position position="36"/>
    </location>
</feature>
<feature type="site" description="Interaction with DNA" evidence="1">
    <location>
        <position position="140"/>
    </location>
</feature>
<feature type="site" description="Interaction with DNA" evidence="1">
    <location>
        <position position="141"/>
    </location>
</feature>
<feature type="site" description="Interaction with DNA" evidence="1">
    <location>
        <position position="144"/>
    </location>
</feature>
<feature type="site" description="Interaction with DNA" evidence="1">
    <location>
        <position position="149"/>
    </location>
</feature>
<feature type="site" description="Interaction with DNA" evidence="1">
    <location>
        <position position="156"/>
    </location>
</feature>
<feature type="site" description="Interaction with DNA" evidence="1">
    <location>
        <position position="290"/>
    </location>
</feature>
<feature type="site" description="Interaction with DNA" evidence="1">
    <location>
        <position position="475"/>
    </location>
</feature>
<feature type="disulfide bond" evidence="4">
    <location>
        <begin position="559"/>
        <end position="578"/>
    </location>
</feature>
<feature type="disulfide bond" evidence="4">
    <location>
        <begin position="561"/>
        <end position="580"/>
    </location>
</feature>
<feature type="strand" evidence="5">
    <location>
        <begin position="8"/>
        <end position="12"/>
    </location>
</feature>
<feature type="helix" evidence="5">
    <location>
        <begin position="14"/>
        <end position="24"/>
    </location>
</feature>
<feature type="helix" evidence="5">
    <location>
        <begin position="25"/>
        <end position="27"/>
    </location>
</feature>
<feature type="strand" evidence="5">
    <location>
        <begin position="28"/>
        <end position="32"/>
    </location>
</feature>
<feature type="strand" evidence="5">
    <location>
        <begin position="37"/>
        <end position="40"/>
    </location>
</feature>
<feature type="strand" evidence="5">
    <location>
        <begin position="42"/>
        <end position="44"/>
    </location>
</feature>
<feature type="strand" evidence="5">
    <location>
        <begin position="51"/>
        <end position="55"/>
    </location>
</feature>
<feature type="helix" evidence="5">
    <location>
        <begin position="64"/>
        <end position="76"/>
    </location>
</feature>
<feature type="strand" evidence="5">
    <location>
        <begin position="79"/>
        <end position="81"/>
    </location>
</feature>
<feature type="helix" evidence="5">
    <location>
        <begin position="87"/>
        <end position="99"/>
    </location>
</feature>
<feature type="helix" evidence="5">
    <location>
        <begin position="116"/>
        <end position="124"/>
    </location>
</feature>
<feature type="helix" evidence="5">
    <location>
        <begin position="131"/>
        <end position="159"/>
    </location>
</feature>
<feature type="helix" evidence="5">
    <location>
        <begin position="166"/>
        <end position="185"/>
    </location>
</feature>
<feature type="strand" evidence="5">
    <location>
        <begin position="190"/>
        <end position="198"/>
    </location>
</feature>
<feature type="strand" evidence="5">
    <location>
        <begin position="201"/>
        <end position="205"/>
    </location>
</feature>
<feature type="helix" evidence="5">
    <location>
        <begin position="215"/>
        <end position="222"/>
    </location>
</feature>
<feature type="strand" evidence="5">
    <location>
        <begin position="227"/>
        <end position="239"/>
    </location>
</feature>
<feature type="helix" evidence="5">
    <location>
        <begin position="247"/>
        <end position="258"/>
    </location>
</feature>
<feature type="helix" evidence="5">
    <location>
        <begin position="262"/>
        <end position="274"/>
    </location>
</feature>
<feature type="strand" evidence="5">
    <location>
        <begin position="279"/>
        <end position="283"/>
    </location>
</feature>
<feature type="helix" evidence="5">
    <location>
        <begin position="298"/>
        <end position="311"/>
    </location>
</feature>
<feature type="helix" evidence="5">
    <location>
        <begin position="314"/>
        <end position="316"/>
    </location>
</feature>
<feature type="helix" evidence="5">
    <location>
        <begin position="346"/>
        <end position="349"/>
    </location>
</feature>
<feature type="turn" evidence="5">
    <location>
        <begin position="350"/>
        <end position="352"/>
    </location>
</feature>
<feature type="helix" evidence="5">
    <location>
        <begin position="355"/>
        <end position="371"/>
    </location>
</feature>
<feature type="strand" evidence="5">
    <location>
        <begin position="376"/>
        <end position="386"/>
    </location>
</feature>
<feature type="strand" evidence="5">
    <location>
        <begin position="393"/>
        <end position="403"/>
    </location>
</feature>
<feature type="helix" evidence="5">
    <location>
        <begin position="405"/>
        <end position="408"/>
    </location>
</feature>
<feature type="strand" evidence="5">
    <location>
        <begin position="431"/>
        <end position="438"/>
    </location>
</feature>
<feature type="helix" evidence="5">
    <location>
        <begin position="447"/>
        <end position="456"/>
    </location>
</feature>
<feature type="turn" evidence="5">
    <location>
        <begin position="462"/>
        <end position="464"/>
    </location>
</feature>
<feature type="helix" evidence="5">
    <location>
        <begin position="465"/>
        <end position="474"/>
    </location>
</feature>
<feature type="strand" evidence="5">
    <location>
        <begin position="477"/>
        <end position="481"/>
    </location>
</feature>
<feature type="strand" evidence="5">
    <location>
        <begin position="484"/>
        <end position="488"/>
    </location>
</feature>
<feature type="helix" evidence="5">
    <location>
        <begin position="489"/>
        <end position="501"/>
    </location>
</feature>
<feature type="turn" evidence="5">
    <location>
        <begin position="503"/>
        <end position="506"/>
    </location>
</feature>
<feature type="helix" evidence="5">
    <location>
        <begin position="508"/>
        <end position="522"/>
    </location>
</feature>
<feature type="helix" evidence="5">
    <location>
        <begin position="528"/>
        <end position="540"/>
    </location>
</feature>
<feature type="strand" evidence="5">
    <location>
        <begin position="553"/>
        <end position="558"/>
    </location>
</feature>
<feature type="strand" evidence="6">
    <location>
        <begin position="560"/>
        <end position="562"/>
    </location>
</feature>
<feature type="strand" evidence="5">
    <location>
        <begin position="564"/>
        <end position="570"/>
    </location>
</feature>
<feature type="strand" evidence="5">
    <location>
        <begin position="573"/>
        <end position="577"/>
    </location>
</feature>
<feature type="strand" evidence="5">
    <location>
        <begin position="579"/>
        <end position="581"/>
    </location>
</feature>
<feature type="strand" evidence="5">
    <location>
        <begin position="593"/>
        <end position="595"/>
    </location>
</feature>
<feature type="strand" evidence="5">
    <location>
        <begin position="598"/>
        <end position="600"/>
    </location>
</feature>
<reference key="1">
    <citation type="journal article" date="1995" name="Biochim. Biophys. Acta">
        <title>Cloning and sequencing of the gene coding for topoisomerase I from the extremely thermophilic eubacterium, Thermotoga maritima.</title>
        <authorList>
            <person name="Bouthier de la Tour C."/>
            <person name="Kaltoum H."/>
            <person name="Portemer C."/>
            <person name="Confalonieri F."/>
            <person name="Huber R."/>
            <person name="Duguet M."/>
        </authorList>
    </citation>
    <scope>NUCLEOTIDE SEQUENCE [GENOMIC DNA]</scope>
    <source>
        <strain>ATCC 43589 / DSM 3109 / JCM 10099 / NBRC 100826 / MSB8</strain>
    </source>
</reference>
<reference key="2">
    <citation type="journal article" date="1999" name="Nature">
        <title>Evidence for lateral gene transfer between Archaea and Bacteria from genome sequence of Thermotoga maritima.</title>
        <authorList>
            <person name="Nelson K.E."/>
            <person name="Clayton R.A."/>
            <person name="Gill S.R."/>
            <person name="Gwinn M.L."/>
            <person name="Dodson R.J."/>
            <person name="Haft D.H."/>
            <person name="Hickey E.K."/>
            <person name="Peterson J.D."/>
            <person name="Nelson W.C."/>
            <person name="Ketchum K.A."/>
            <person name="McDonald L.A."/>
            <person name="Utterback T.R."/>
            <person name="Malek J.A."/>
            <person name="Linher K.D."/>
            <person name="Garrett M.M."/>
            <person name="Stewart A.M."/>
            <person name="Cotton M.D."/>
            <person name="Pratt M.S."/>
            <person name="Phillips C.A."/>
            <person name="Richardson D.L."/>
            <person name="Heidelberg J.F."/>
            <person name="Sutton G.G."/>
            <person name="Fleischmann R.D."/>
            <person name="Eisen J.A."/>
            <person name="White O."/>
            <person name="Salzberg S.L."/>
            <person name="Smith H.O."/>
            <person name="Venter J.C."/>
            <person name="Fraser C.M."/>
        </authorList>
    </citation>
    <scope>NUCLEOTIDE SEQUENCE [LARGE SCALE GENOMIC DNA]</scope>
    <source>
        <strain>ATCC 43589 / DSM 3109 / JCM 10099 / NBRC 100826 / MSB8</strain>
    </source>
</reference>
<reference key="3">
    <citation type="journal article" date="2006" name="J. Mol. Biol.">
        <title>Crystal structure of full length topoisomerase I from Thermotoga maritima.</title>
        <authorList>
            <person name="Hansen G."/>
            <person name="Harrenga A."/>
            <person name="Wieland B."/>
            <person name="Schomburg D."/>
            <person name="Reinemer P."/>
        </authorList>
    </citation>
    <scope>X-RAY CRYSTALLOGRAPHY (1.7 ANGSTROMS) OF 3-633</scope>
    <scope>DISULFIDE BOND</scope>
</reference>
<accession>P46799</accession>
<keyword id="KW-0002">3D-structure</keyword>
<keyword id="KW-1015">Disulfide bond</keyword>
<keyword id="KW-0238">DNA-binding</keyword>
<keyword id="KW-0413">Isomerase</keyword>
<keyword id="KW-0460">Magnesium</keyword>
<keyword id="KW-0479">Metal-binding</keyword>
<keyword id="KW-1185">Reference proteome</keyword>
<keyword id="KW-0799">Topoisomerase</keyword>
<keyword id="KW-0862">Zinc</keyword>
<keyword id="KW-0863">Zinc-finger</keyword>
<evidence type="ECO:0000255" key="1">
    <source>
        <dbReference type="HAMAP-Rule" id="MF_00952"/>
    </source>
</evidence>
<evidence type="ECO:0000255" key="2">
    <source>
        <dbReference type="PROSITE-ProRule" id="PRU01383"/>
    </source>
</evidence>
<evidence type="ECO:0000256" key="3">
    <source>
        <dbReference type="SAM" id="MobiDB-lite"/>
    </source>
</evidence>
<evidence type="ECO:0000269" key="4">
    <source>
    </source>
</evidence>
<evidence type="ECO:0007829" key="5">
    <source>
        <dbReference type="PDB" id="2GAI"/>
    </source>
</evidence>
<evidence type="ECO:0007829" key="6">
    <source>
        <dbReference type="PDB" id="2GAJ"/>
    </source>
</evidence>
<proteinExistence type="evidence at protein level"/>
<comment type="function">
    <text evidence="1">Releases the supercoiling and torsional tension of DNA, which is introduced during the DNA replication and transcription, by transiently cleaving and rejoining one strand of the DNA duplex. Introduces a single-strand break via transesterification at a target site in duplex DNA. The scissile phosphodiester is attacked by the catalytic tyrosine of the enzyme, resulting in the formation of a DNA-(5'-phosphotyrosyl)-enzyme intermediate and the expulsion of a 3'-OH DNA strand. The free DNA strand then undergoes passage around the unbroken strand, thus removing DNA supercoils. Finally, in the religation step, the DNA 3'-OH attacks the covalent intermediate to expel the active-site tyrosine and restore the DNA phosphodiester backbone.</text>
</comment>
<comment type="catalytic activity">
    <reaction evidence="1">
        <text>ATP-independent breakage of single-stranded DNA, followed by passage and rejoining.</text>
        <dbReference type="EC" id="5.6.2.1"/>
    </reaction>
</comment>
<comment type="cofactor">
    <cofactor evidence="1">
        <name>Mg(2+)</name>
        <dbReference type="ChEBI" id="CHEBI:18420"/>
    </cofactor>
</comment>
<comment type="subunit">
    <text evidence="1">Monomer.</text>
</comment>
<comment type="similarity">
    <text evidence="1">Belongs to the type IA topoisomerase family.</text>
</comment>
<gene>
    <name evidence="1" type="primary">topA</name>
    <name type="ordered locus">TM_0258</name>
</gene>